<gene>
    <name type="primary">MT-CYB</name>
    <name type="synonym">COB</name>
    <name type="synonym">CYTB</name>
    <name type="synonym">MTCYB</name>
</gene>
<sequence length="379" mass="42610">MTNIRKTHPLMKIVNNSFIDLPAPSNISSWWNFGSLLGICLILQILTGLFLAMHYTSDTMTAFSSVTHICRDVNYGWLIRYLHANGASMFFICLFLHVGRGLYYGSYMFMETWNIGVLLLFTVMATAFMGYVLPWGQMSFWGATVITNLLSAIPYIGTDLVEWIWGGFSVDKATLTRFFAFHFILPFIIAALAGVHLLFLHETGSNNPSGLSSDMDKIPFHPYYTIKDILGALVLILALSSLVLFSPDLLGDPDNYIPANPLNTPPHIKPEWYFLFAYAILRSIPNKLGGVLALVFSILVLALMPLLHTSKQRSMMFRPISQCLFWLLVADLLILTWIGGQPVEHPFIMIGQLASILYFSLILILMPLASLAENNLLKW</sequence>
<comment type="function">
    <text evidence="2">Component of the ubiquinol-cytochrome c reductase complex (complex III or cytochrome b-c1 complex) that is part of the mitochondrial respiratory chain. The b-c1 complex mediates electron transfer from ubiquinol to cytochrome c. Contributes to the generation of a proton gradient across the mitochondrial membrane that is then used for ATP synthesis.</text>
</comment>
<comment type="cofactor">
    <cofactor evidence="2">
        <name>heme b</name>
        <dbReference type="ChEBI" id="CHEBI:60344"/>
    </cofactor>
    <text evidence="2">Binds 2 heme b groups non-covalently.</text>
</comment>
<comment type="subunit">
    <text evidence="2">The cytochrome bc1 complex contains 11 subunits: 3 respiratory subunits (MT-CYB, CYC1 and UQCRFS1), 2 core proteins (UQCRC1 and UQCRC2) and 6 low-molecular weight proteins (UQCRH/QCR6, UQCRB/QCR7, UQCRQ/QCR8, UQCR10/QCR9, UQCR11/QCR10 and a cleavage product of UQCRFS1). This cytochrome bc1 complex then forms a dimer.</text>
</comment>
<comment type="subcellular location">
    <subcellularLocation>
        <location evidence="2">Mitochondrion inner membrane</location>
        <topology evidence="2">Multi-pass membrane protein</topology>
    </subcellularLocation>
</comment>
<comment type="miscellaneous">
    <text evidence="1">Heme 1 (or BL or b562) is low-potential and absorbs at about 562 nm, and heme 2 (or BH or b566) is high-potential and absorbs at about 566 nm.</text>
</comment>
<comment type="similarity">
    <text evidence="3 4">Belongs to the cytochrome b family.</text>
</comment>
<comment type="caution">
    <text evidence="2">The full-length protein contains only eight transmembrane helices, not nine as predicted by bioinformatics tools.</text>
</comment>
<organism>
    <name type="scientific">Mogera tokudae</name>
    <name type="common">Sado mole</name>
    <name type="synonym">Tokuda's mole</name>
    <dbReference type="NCBI Taxonomy" id="114414"/>
    <lineage>
        <taxon>Eukaryota</taxon>
        <taxon>Metazoa</taxon>
        <taxon>Chordata</taxon>
        <taxon>Craniata</taxon>
        <taxon>Vertebrata</taxon>
        <taxon>Euteleostomi</taxon>
        <taxon>Mammalia</taxon>
        <taxon>Eutheria</taxon>
        <taxon>Laurasiatheria</taxon>
        <taxon>Eulipotyphla</taxon>
        <taxon>Talpidae</taxon>
        <taxon>Mogera</taxon>
    </lineage>
</organism>
<dbReference type="EMBL" id="AB037607">
    <property type="protein sequence ID" value="BAA90566.1"/>
    <property type="molecule type" value="Genomic_DNA"/>
</dbReference>
<dbReference type="SMR" id="Q9MQY0"/>
<dbReference type="GO" id="GO:0005743">
    <property type="term" value="C:mitochondrial inner membrane"/>
    <property type="evidence" value="ECO:0007669"/>
    <property type="project" value="UniProtKB-SubCell"/>
</dbReference>
<dbReference type="GO" id="GO:0045275">
    <property type="term" value="C:respiratory chain complex III"/>
    <property type="evidence" value="ECO:0007669"/>
    <property type="project" value="InterPro"/>
</dbReference>
<dbReference type="GO" id="GO:0046872">
    <property type="term" value="F:metal ion binding"/>
    <property type="evidence" value="ECO:0007669"/>
    <property type="project" value="UniProtKB-KW"/>
</dbReference>
<dbReference type="GO" id="GO:0008121">
    <property type="term" value="F:ubiquinol-cytochrome-c reductase activity"/>
    <property type="evidence" value="ECO:0007669"/>
    <property type="project" value="InterPro"/>
</dbReference>
<dbReference type="GO" id="GO:0006122">
    <property type="term" value="P:mitochondrial electron transport, ubiquinol to cytochrome c"/>
    <property type="evidence" value="ECO:0007669"/>
    <property type="project" value="TreeGrafter"/>
</dbReference>
<dbReference type="CDD" id="cd00290">
    <property type="entry name" value="cytochrome_b_C"/>
    <property type="match status" value="1"/>
</dbReference>
<dbReference type="CDD" id="cd00284">
    <property type="entry name" value="Cytochrome_b_N"/>
    <property type="match status" value="1"/>
</dbReference>
<dbReference type="FunFam" id="1.20.810.10:FF:000002">
    <property type="entry name" value="Cytochrome b"/>
    <property type="match status" value="1"/>
</dbReference>
<dbReference type="Gene3D" id="1.20.810.10">
    <property type="entry name" value="Cytochrome Bc1 Complex, Chain C"/>
    <property type="match status" value="1"/>
</dbReference>
<dbReference type="InterPro" id="IPR005798">
    <property type="entry name" value="Cyt_b/b6_C"/>
</dbReference>
<dbReference type="InterPro" id="IPR036150">
    <property type="entry name" value="Cyt_b/b6_C_sf"/>
</dbReference>
<dbReference type="InterPro" id="IPR005797">
    <property type="entry name" value="Cyt_b/b6_N"/>
</dbReference>
<dbReference type="InterPro" id="IPR027387">
    <property type="entry name" value="Cytb/b6-like_sf"/>
</dbReference>
<dbReference type="InterPro" id="IPR030689">
    <property type="entry name" value="Cytochrome_b"/>
</dbReference>
<dbReference type="InterPro" id="IPR048260">
    <property type="entry name" value="Cytochrome_b_C_euk/bac"/>
</dbReference>
<dbReference type="InterPro" id="IPR048259">
    <property type="entry name" value="Cytochrome_b_N_euk/bac"/>
</dbReference>
<dbReference type="InterPro" id="IPR016174">
    <property type="entry name" value="Di-haem_cyt_TM"/>
</dbReference>
<dbReference type="PANTHER" id="PTHR19271">
    <property type="entry name" value="CYTOCHROME B"/>
    <property type="match status" value="1"/>
</dbReference>
<dbReference type="PANTHER" id="PTHR19271:SF16">
    <property type="entry name" value="CYTOCHROME B"/>
    <property type="match status" value="1"/>
</dbReference>
<dbReference type="Pfam" id="PF00032">
    <property type="entry name" value="Cytochrom_B_C"/>
    <property type="match status" value="1"/>
</dbReference>
<dbReference type="Pfam" id="PF00033">
    <property type="entry name" value="Cytochrome_B"/>
    <property type="match status" value="1"/>
</dbReference>
<dbReference type="PIRSF" id="PIRSF038885">
    <property type="entry name" value="COB"/>
    <property type="match status" value="1"/>
</dbReference>
<dbReference type="SUPFAM" id="SSF81648">
    <property type="entry name" value="a domain/subunit of cytochrome bc1 complex (Ubiquinol-cytochrome c reductase)"/>
    <property type="match status" value="1"/>
</dbReference>
<dbReference type="SUPFAM" id="SSF81342">
    <property type="entry name" value="Transmembrane di-heme cytochromes"/>
    <property type="match status" value="1"/>
</dbReference>
<dbReference type="PROSITE" id="PS51003">
    <property type="entry name" value="CYTB_CTER"/>
    <property type="match status" value="1"/>
</dbReference>
<dbReference type="PROSITE" id="PS51002">
    <property type="entry name" value="CYTB_NTER"/>
    <property type="match status" value="1"/>
</dbReference>
<name>CYB_MOGTO</name>
<reference key="1">
    <citation type="journal article" date="2000" name="Genes Genet. Syst.">
        <title>Molecular phylogeny of East Asian moles inferred from the sequence variation of the mitochondrial cytochrome b gene.</title>
        <authorList>
            <person name="Tsuchiya K."/>
            <person name="Suzuki H."/>
            <person name="Shinohara A."/>
            <person name="Harada M."/>
            <person name="Wakana S."/>
            <person name="Sakaizumi M."/>
            <person name="Han S.H."/>
            <person name="Lin L.K."/>
            <person name="Kryukov A.P."/>
        </authorList>
    </citation>
    <scope>NUCLEOTIDE SEQUENCE [GENOMIC DNA]</scope>
</reference>
<protein>
    <recommendedName>
        <fullName>Cytochrome b</fullName>
    </recommendedName>
    <alternativeName>
        <fullName>Complex III subunit 3</fullName>
    </alternativeName>
    <alternativeName>
        <fullName>Complex III subunit III</fullName>
    </alternativeName>
    <alternativeName>
        <fullName>Cytochrome b-c1 complex subunit 3</fullName>
    </alternativeName>
    <alternativeName>
        <fullName>Ubiquinol-cytochrome-c reductase complex cytochrome b subunit</fullName>
    </alternativeName>
</protein>
<evidence type="ECO:0000250" key="1"/>
<evidence type="ECO:0000250" key="2">
    <source>
        <dbReference type="UniProtKB" id="P00157"/>
    </source>
</evidence>
<evidence type="ECO:0000255" key="3">
    <source>
        <dbReference type="PROSITE-ProRule" id="PRU00967"/>
    </source>
</evidence>
<evidence type="ECO:0000255" key="4">
    <source>
        <dbReference type="PROSITE-ProRule" id="PRU00968"/>
    </source>
</evidence>
<feature type="chain" id="PRO_0000061197" description="Cytochrome b">
    <location>
        <begin position="1"/>
        <end position="379"/>
    </location>
</feature>
<feature type="transmembrane region" description="Helical" evidence="2">
    <location>
        <begin position="33"/>
        <end position="53"/>
    </location>
</feature>
<feature type="transmembrane region" description="Helical" evidence="2">
    <location>
        <begin position="77"/>
        <end position="98"/>
    </location>
</feature>
<feature type="transmembrane region" description="Helical" evidence="2">
    <location>
        <begin position="113"/>
        <end position="133"/>
    </location>
</feature>
<feature type="transmembrane region" description="Helical" evidence="2">
    <location>
        <begin position="178"/>
        <end position="198"/>
    </location>
</feature>
<feature type="transmembrane region" description="Helical" evidence="2">
    <location>
        <begin position="226"/>
        <end position="246"/>
    </location>
</feature>
<feature type="transmembrane region" description="Helical" evidence="2">
    <location>
        <begin position="288"/>
        <end position="308"/>
    </location>
</feature>
<feature type="transmembrane region" description="Helical" evidence="2">
    <location>
        <begin position="320"/>
        <end position="340"/>
    </location>
</feature>
<feature type="transmembrane region" description="Helical" evidence="2">
    <location>
        <begin position="347"/>
        <end position="367"/>
    </location>
</feature>
<feature type="binding site" description="axial binding residue" evidence="2">
    <location>
        <position position="83"/>
    </location>
    <ligand>
        <name>heme b</name>
        <dbReference type="ChEBI" id="CHEBI:60344"/>
        <label>b562</label>
    </ligand>
    <ligandPart>
        <name>Fe</name>
        <dbReference type="ChEBI" id="CHEBI:18248"/>
    </ligandPart>
</feature>
<feature type="binding site" description="axial binding residue" evidence="2">
    <location>
        <position position="97"/>
    </location>
    <ligand>
        <name>heme b</name>
        <dbReference type="ChEBI" id="CHEBI:60344"/>
        <label>b566</label>
    </ligand>
    <ligandPart>
        <name>Fe</name>
        <dbReference type="ChEBI" id="CHEBI:18248"/>
    </ligandPart>
</feature>
<feature type="binding site" description="axial binding residue" evidence="2">
    <location>
        <position position="182"/>
    </location>
    <ligand>
        <name>heme b</name>
        <dbReference type="ChEBI" id="CHEBI:60344"/>
        <label>b562</label>
    </ligand>
    <ligandPart>
        <name>Fe</name>
        <dbReference type="ChEBI" id="CHEBI:18248"/>
    </ligandPart>
</feature>
<feature type="binding site" description="axial binding residue" evidence="2">
    <location>
        <position position="196"/>
    </location>
    <ligand>
        <name>heme b</name>
        <dbReference type="ChEBI" id="CHEBI:60344"/>
        <label>b566</label>
    </ligand>
    <ligandPart>
        <name>Fe</name>
        <dbReference type="ChEBI" id="CHEBI:18248"/>
    </ligandPart>
</feature>
<feature type="binding site" evidence="2">
    <location>
        <position position="201"/>
    </location>
    <ligand>
        <name>a ubiquinone</name>
        <dbReference type="ChEBI" id="CHEBI:16389"/>
    </ligand>
</feature>
<accession>Q9MQY0</accession>
<proteinExistence type="inferred from homology"/>
<geneLocation type="mitochondrion"/>
<keyword id="KW-0249">Electron transport</keyword>
<keyword id="KW-0349">Heme</keyword>
<keyword id="KW-0408">Iron</keyword>
<keyword id="KW-0472">Membrane</keyword>
<keyword id="KW-0479">Metal-binding</keyword>
<keyword id="KW-0496">Mitochondrion</keyword>
<keyword id="KW-0999">Mitochondrion inner membrane</keyword>
<keyword id="KW-0679">Respiratory chain</keyword>
<keyword id="KW-0812">Transmembrane</keyword>
<keyword id="KW-1133">Transmembrane helix</keyword>
<keyword id="KW-0813">Transport</keyword>
<keyword id="KW-0830">Ubiquinone</keyword>